<evidence type="ECO:0000250" key="1"/>
<evidence type="ECO:0000255" key="2">
    <source>
        <dbReference type="HAMAP-Rule" id="MF_00610"/>
    </source>
</evidence>
<gene>
    <name evidence="2" type="primary">petA</name>
</gene>
<dbReference type="EMBL" id="DQ887677">
    <property type="protein sequence ID" value="ABI14485.1"/>
    <property type="molecule type" value="Genomic_DNA"/>
</dbReference>
<dbReference type="RefSeq" id="YP_784486.1">
    <property type="nucleotide sequence ID" value="NC_008457.1"/>
</dbReference>
<dbReference type="SMR" id="Q06GP7"/>
<dbReference type="GeneID" id="4363669"/>
<dbReference type="GO" id="GO:0009535">
    <property type="term" value="C:chloroplast thylakoid membrane"/>
    <property type="evidence" value="ECO:0007669"/>
    <property type="project" value="UniProtKB-SubCell"/>
</dbReference>
<dbReference type="GO" id="GO:0009055">
    <property type="term" value="F:electron transfer activity"/>
    <property type="evidence" value="ECO:0007669"/>
    <property type="project" value="UniProtKB-UniRule"/>
</dbReference>
<dbReference type="GO" id="GO:0020037">
    <property type="term" value="F:heme binding"/>
    <property type="evidence" value="ECO:0007669"/>
    <property type="project" value="InterPro"/>
</dbReference>
<dbReference type="GO" id="GO:0005506">
    <property type="term" value="F:iron ion binding"/>
    <property type="evidence" value="ECO:0007669"/>
    <property type="project" value="InterPro"/>
</dbReference>
<dbReference type="GO" id="GO:0015979">
    <property type="term" value="P:photosynthesis"/>
    <property type="evidence" value="ECO:0007669"/>
    <property type="project" value="UniProtKB-UniRule"/>
</dbReference>
<dbReference type="FunFam" id="1.20.5.700:FF:000001">
    <property type="entry name" value="Cytochrome f"/>
    <property type="match status" value="1"/>
</dbReference>
<dbReference type="FunFam" id="2.40.50.100:FF:000007">
    <property type="entry name" value="Cytochrome f"/>
    <property type="match status" value="1"/>
</dbReference>
<dbReference type="FunFam" id="2.60.40.830:FF:000001">
    <property type="entry name" value="Cytochrome f"/>
    <property type="match status" value="1"/>
</dbReference>
<dbReference type="Gene3D" id="2.40.50.100">
    <property type="match status" value="1"/>
</dbReference>
<dbReference type="Gene3D" id="2.60.40.830">
    <property type="entry name" value="Cytochrome f large domain"/>
    <property type="match status" value="1"/>
</dbReference>
<dbReference type="Gene3D" id="1.20.5.700">
    <property type="entry name" value="Single helix bin"/>
    <property type="match status" value="1"/>
</dbReference>
<dbReference type="HAMAP" id="MF_00610">
    <property type="entry name" value="Cytb6_f_cytF"/>
    <property type="match status" value="1"/>
</dbReference>
<dbReference type="InterPro" id="IPR024058">
    <property type="entry name" value="Cyt-f_TM"/>
</dbReference>
<dbReference type="InterPro" id="IPR002325">
    <property type="entry name" value="Cyt_f"/>
</dbReference>
<dbReference type="InterPro" id="IPR024094">
    <property type="entry name" value="Cyt_f_lg_dom"/>
</dbReference>
<dbReference type="InterPro" id="IPR036826">
    <property type="entry name" value="Cyt_f_lg_dom_sf"/>
</dbReference>
<dbReference type="InterPro" id="IPR011054">
    <property type="entry name" value="Rudment_hybrid_motif"/>
</dbReference>
<dbReference type="PANTHER" id="PTHR33288">
    <property type="match status" value="1"/>
</dbReference>
<dbReference type="PANTHER" id="PTHR33288:SF10">
    <property type="entry name" value="CYTOCHROME F"/>
    <property type="match status" value="1"/>
</dbReference>
<dbReference type="Pfam" id="PF01333">
    <property type="entry name" value="Apocytochr_F_C"/>
    <property type="match status" value="1"/>
</dbReference>
<dbReference type="Pfam" id="PF16639">
    <property type="entry name" value="Apocytochr_F_N"/>
    <property type="match status" value="1"/>
</dbReference>
<dbReference type="PRINTS" id="PR00610">
    <property type="entry name" value="CYTOCHROMEF"/>
</dbReference>
<dbReference type="SUPFAM" id="SSF103431">
    <property type="entry name" value="Cytochrome f subunit of the cytochrome b6f complex, transmembrane anchor"/>
    <property type="match status" value="1"/>
</dbReference>
<dbReference type="SUPFAM" id="SSF49441">
    <property type="entry name" value="Cytochrome f, large domain"/>
    <property type="match status" value="1"/>
</dbReference>
<dbReference type="SUPFAM" id="SSF51246">
    <property type="entry name" value="Rudiment single hybrid motif"/>
    <property type="match status" value="1"/>
</dbReference>
<dbReference type="PROSITE" id="PS51010">
    <property type="entry name" value="CYTF"/>
    <property type="match status" value="1"/>
</dbReference>
<comment type="function">
    <text evidence="2">Component of the cytochrome b6-f complex, which mediates electron transfer between photosystem II (PSII) and photosystem I (PSI), cyclic electron flow around PSI, and state transitions.</text>
</comment>
<comment type="cofactor">
    <cofactor evidence="2">
        <name>heme</name>
        <dbReference type="ChEBI" id="CHEBI:30413"/>
    </cofactor>
    <text evidence="2">Binds 1 heme group covalently.</text>
</comment>
<comment type="subunit">
    <text evidence="1">The 4 large subunits of the cytochrome b6-f complex are cytochrome b6, subunit IV (17 kDa polypeptide, petD), cytochrome f and the Rieske protein, while the 4 small subunits are PetG, PetL, PetM and PetN. The complex functions as a dimer (By similarity).</text>
</comment>
<comment type="subcellular location">
    <subcellularLocation>
        <location evidence="2">Plastid</location>
        <location evidence="2">Chloroplast thylakoid membrane</location>
        <topology evidence="2">Single-pass membrane protein</topology>
    </subcellularLocation>
</comment>
<comment type="similarity">
    <text evidence="2">Belongs to the cytochrome f family.</text>
</comment>
<name>CYF_PIPCE</name>
<keyword id="KW-0150">Chloroplast</keyword>
<keyword id="KW-0249">Electron transport</keyword>
<keyword id="KW-0349">Heme</keyword>
<keyword id="KW-0408">Iron</keyword>
<keyword id="KW-0472">Membrane</keyword>
<keyword id="KW-0479">Metal-binding</keyword>
<keyword id="KW-0602">Photosynthesis</keyword>
<keyword id="KW-0934">Plastid</keyword>
<keyword id="KW-0732">Signal</keyword>
<keyword id="KW-0793">Thylakoid</keyword>
<keyword id="KW-0812">Transmembrane</keyword>
<keyword id="KW-1133">Transmembrane helix</keyword>
<keyword id="KW-0813">Transport</keyword>
<feature type="signal peptide" evidence="2">
    <location>
        <begin position="1"/>
        <end position="35"/>
    </location>
</feature>
<feature type="chain" id="PRO_0000275441" description="Cytochrome f">
    <location>
        <begin position="36"/>
        <end position="320"/>
    </location>
</feature>
<feature type="transmembrane region" description="Helical" evidence="2">
    <location>
        <begin position="286"/>
        <end position="306"/>
    </location>
</feature>
<feature type="binding site" description="axial binding residue" evidence="2">
    <location>
        <position position="36"/>
    </location>
    <ligand>
        <name>heme</name>
        <dbReference type="ChEBI" id="CHEBI:30413"/>
    </ligand>
    <ligandPart>
        <name>Fe</name>
        <dbReference type="ChEBI" id="CHEBI:18248"/>
    </ligandPart>
</feature>
<feature type="binding site" description="covalent" evidence="2">
    <location>
        <position position="56"/>
    </location>
    <ligand>
        <name>heme</name>
        <dbReference type="ChEBI" id="CHEBI:30413"/>
    </ligand>
</feature>
<feature type="binding site" description="covalent" evidence="2">
    <location>
        <position position="59"/>
    </location>
    <ligand>
        <name>heme</name>
        <dbReference type="ChEBI" id="CHEBI:30413"/>
    </ligand>
</feature>
<feature type="binding site" description="axial binding residue" evidence="2">
    <location>
        <position position="60"/>
    </location>
    <ligand>
        <name>heme</name>
        <dbReference type="ChEBI" id="CHEBI:30413"/>
    </ligand>
    <ligandPart>
        <name>Fe</name>
        <dbReference type="ChEBI" id="CHEBI:18248"/>
    </ligandPart>
</feature>
<organism>
    <name type="scientific">Piper cenocladum</name>
    <name type="common">Ant piper</name>
    <dbReference type="NCBI Taxonomy" id="398741"/>
    <lineage>
        <taxon>Eukaryota</taxon>
        <taxon>Viridiplantae</taxon>
        <taxon>Streptophyta</taxon>
        <taxon>Embryophyta</taxon>
        <taxon>Tracheophyta</taxon>
        <taxon>Spermatophyta</taxon>
        <taxon>Magnoliopsida</taxon>
        <taxon>Magnoliidae</taxon>
        <taxon>Piperales</taxon>
        <taxon>Piperaceae</taxon>
        <taxon>Piper</taxon>
    </lineage>
</organism>
<accession>Q06GP7</accession>
<sequence length="320" mass="35130">MQNRNTFSWVKEPINRSISVLIIIYVITQTSISNAYPIFAQQGYENPREATGRIVCANCHLANKPVDIEVPQAVLPDTVFEAVVRIPYDSQLKQVLANGKKGGLNVGAVLILPEGFELAPPDRISPEMKEKIGNLSFQSYRPNKKNILVIGPVPGQKYREILFPILSPDPAAKKDAHFLKYPIYVGGNRGRGQIYPDGSKSNNTVYNATAAGTITKILRKEKGGYEISIADASDGRQVVDNIPPGPELLVSEGESIKLDQPLTSNPNVGGFGQGDAEIVLQDPLRVQGLLFFLASVTLAQIFLVLKKKQFEKVQLSEMNF</sequence>
<geneLocation type="chloroplast"/>
<proteinExistence type="inferred from homology"/>
<protein>
    <recommendedName>
        <fullName evidence="2">Cytochrome f</fullName>
    </recommendedName>
</protein>
<reference key="1">
    <citation type="journal article" date="2006" name="BMC Evol. Biol.">
        <title>Complete plastid genome sequences of Drimys, Liriodendron, and Piper: implications for the phylogenetic relationships of magnoliids.</title>
        <authorList>
            <person name="Cai Z."/>
            <person name="Penaflor C."/>
            <person name="Kuehl J.V."/>
            <person name="Leebens-Mack J."/>
            <person name="Carlson J.E."/>
            <person name="dePamphilis C.W."/>
            <person name="Boore J.L."/>
            <person name="Jansen R.K."/>
        </authorList>
    </citation>
    <scope>NUCLEOTIDE SEQUENCE [LARGE SCALE GENOMIC DNA]</scope>
</reference>